<protein>
    <recommendedName>
        <fullName evidence="6">Inactive peptidyl-prolyl cis-trans isomerase shutdown</fullName>
    </recommendedName>
</protein>
<name>FKBP6_DROME</name>
<proteinExistence type="evidence at protein level"/>
<evidence type="ECO:0000255" key="1">
    <source>
        <dbReference type="PROSITE-ProRule" id="PRU00277"/>
    </source>
</evidence>
<evidence type="ECO:0000256" key="2">
    <source>
        <dbReference type="SAM" id="MobiDB-lite"/>
    </source>
</evidence>
<evidence type="ECO:0000269" key="3">
    <source>
    </source>
</evidence>
<evidence type="ECO:0000269" key="4">
    <source>
    </source>
</evidence>
<evidence type="ECO:0000269" key="5">
    <source>
    </source>
</evidence>
<evidence type="ECO:0000305" key="6"/>
<evidence type="ECO:0000312" key="7">
    <source>
        <dbReference type="FlyBase" id="FBgn0003401"/>
    </source>
</evidence>
<evidence type="ECO:0000312" key="8">
    <source>
        <dbReference type="Proteomes" id="UP000000803"/>
    </source>
</evidence>
<gene>
    <name evidence="7" type="primary">shu</name>
    <name evidence="7" type="ORF">CG4735</name>
</gene>
<sequence length="455" mass="51838">MEENFEPYTPQLLKNPLSYSDLVKKGVEFEVDNSQQNHARDLGLDSDSDSDYEDALDVDGEELRSPWTYSFDELRALMSEIDENIYKRITRTGHVDREAVPNKARVSVRYSGYWEGETAPFDSSLLRGSKFVFETGQGTVVEGLEVAVRSMRPYEQAEFIISYKLLFGELGCPPRIKPKADALFKVEVIDYSLIGDAKGIDAIPQEDRDKFCVVYPKAVDLHLHGKDSVKLGRYQSAATAFERAVSSLNYCRMANDEEERKQTELLTTLNQNLMIVYNKMNKPKRACIMMKALRHLTMGNPSCKALFQEGRALAALGEYNLARNAYLQAQAKQPANKEISDEIISMNKRISKYEEASRDIWARAFSLKNSKSDVRKTPAQLEKEAKEQDFNDKMEDLIRRFKNTSDQQVSFSRKSYSNAQFDATCKLAKEHNLKLTLSPIQEDVLTLSKPDVKFA</sequence>
<reference key="1">
    <citation type="journal article" date="2000" name="Science">
        <title>The genome sequence of Drosophila melanogaster.</title>
        <authorList>
            <person name="Adams M.D."/>
            <person name="Celniker S.E."/>
            <person name="Holt R.A."/>
            <person name="Evans C.A."/>
            <person name="Gocayne J.D."/>
            <person name="Amanatides P.G."/>
            <person name="Scherer S.E."/>
            <person name="Li P.W."/>
            <person name="Hoskins R.A."/>
            <person name="Galle R.F."/>
            <person name="George R.A."/>
            <person name="Lewis S.E."/>
            <person name="Richards S."/>
            <person name="Ashburner M."/>
            <person name="Henderson S.N."/>
            <person name="Sutton G.G."/>
            <person name="Wortman J.R."/>
            <person name="Yandell M.D."/>
            <person name="Zhang Q."/>
            <person name="Chen L.X."/>
            <person name="Brandon R.C."/>
            <person name="Rogers Y.-H.C."/>
            <person name="Blazej R.G."/>
            <person name="Champe M."/>
            <person name="Pfeiffer B.D."/>
            <person name="Wan K.H."/>
            <person name="Doyle C."/>
            <person name="Baxter E.G."/>
            <person name="Helt G."/>
            <person name="Nelson C.R."/>
            <person name="Miklos G.L.G."/>
            <person name="Abril J.F."/>
            <person name="Agbayani A."/>
            <person name="An H.-J."/>
            <person name="Andrews-Pfannkoch C."/>
            <person name="Baldwin D."/>
            <person name="Ballew R.M."/>
            <person name="Basu A."/>
            <person name="Baxendale J."/>
            <person name="Bayraktaroglu L."/>
            <person name="Beasley E.M."/>
            <person name="Beeson K.Y."/>
            <person name="Benos P.V."/>
            <person name="Berman B.P."/>
            <person name="Bhandari D."/>
            <person name="Bolshakov S."/>
            <person name="Borkova D."/>
            <person name="Botchan M.R."/>
            <person name="Bouck J."/>
            <person name="Brokstein P."/>
            <person name="Brottier P."/>
            <person name="Burtis K.C."/>
            <person name="Busam D.A."/>
            <person name="Butler H."/>
            <person name="Cadieu E."/>
            <person name="Center A."/>
            <person name="Chandra I."/>
            <person name="Cherry J.M."/>
            <person name="Cawley S."/>
            <person name="Dahlke C."/>
            <person name="Davenport L.B."/>
            <person name="Davies P."/>
            <person name="de Pablos B."/>
            <person name="Delcher A."/>
            <person name="Deng Z."/>
            <person name="Mays A.D."/>
            <person name="Dew I."/>
            <person name="Dietz S.M."/>
            <person name="Dodson K."/>
            <person name="Doup L.E."/>
            <person name="Downes M."/>
            <person name="Dugan-Rocha S."/>
            <person name="Dunkov B.C."/>
            <person name="Dunn P."/>
            <person name="Durbin K.J."/>
            <person name="Evangelista C.C."/>
            <person name="Ferraz C."/>
            <person name="Ferriera S."/>
            <person name="Fleischmann W."/>
            <person name="Fosler C."/>
            <person name="Gabrielian A.E."/>
            <person name="Garg N.S."/>
            <person name="Gelbart W.M."/>
            <person name="Glasser K."/>
            <person name="Glodek A."/>
            <person name="Gong F."/>
            <person name="Gorrell J.H."/>
            <person name="Gu Z."/>
            <person name="Guan P."/>
            <person name="Harris M."/>
            <person name="Harris N.L."/>
            <person name="Harvey D.A."/>
            <person name="Heiman T.J."/>
            <person name="Hernandez J.R."/>
            <person name="Houck J."/>
            <person name="Hostin D."/>
            <person name="Houston K.A."/>
            <person name="Howland T.J."/>
            <person name="Wei M.-H."/>
            <person name="Ibegwam C."/>
            <person name="Jalali M."/>
            <person name="Kalush F."/>
            <person name="Karpen G.H."/>
            <person name="Ke Z."/>
            <person name="Kennison J.A."/>
            <person name="Ketchum K.A."/>
            <person name="Kimmel B.E."/>
            <person name="Kodira C.D."/>
            <person name="Kraft C.L."/>
            <person name="Kravitz S."/>
            <person name="Kulp D."/>
            <person name="Lai Z."/>
            <person name="Lasko P."/>
            <person name="Lei Y."/>
            <person name="Levitsky A.A."/>
            <person name="Li J.H."/>
            <person name="Li Z."/>
            <person name="Liang Y."/>
            <person name="Lin X."/>
            <person name="Liu X."/>
            <person name="Mattei B."/>
            <person name="McIntosh T.C."/>
            <person name="McLeod M.P."/>
            <person name="McPherson D."/>
            <person name="Merkulov G."/>
            <person name="Milshina N.V."/>
            <person name="Mobarry C."/>
            <person name="Morris J."/>
            <person name="Moshrefi A."/>
            <person name="Mount S.M."/>
            <person name="Moy M."/>
            <person name="Murphy B."/>
            <person name="Murphy L."/>
            <person name="Muzny D.M."/>
            <person name="Nelson D.L."/>
            <person name="Nelson D.R."/>
            <person name="Nelson K.A."/>
            <person name="Nixon K."/>
            <person name="Nusskern D.R."/>
            <person name="Pacleb J.M."/>
            <person name="Palazzolo M."/>
            <person name="Pittman G.S."/>
            <person name="Pan S."/>
            <person name="Pollard J."/>
            <person name="Puri V."/>
            <person name="Reese M.G."/>
            <person name="Reinert K."/>
            <person name="Remington K."/>
            <person name="Saunders R.D.C."/>
            <person name="Scheeler F."/>
            <person name="Shen H."/>
            <person name="Shue B.C."/>
            <person name="Siden-Kiamos I."/>
            <person name="Simpson M."/>
            <person name="Skupski M.P."/>
            <person name="Smith T.J."/>
            <person name="Spier E."/>
            <person name="Spradling A.C."/>
            <person name="Stapleton M."/>
            <person name="Strong R."/>
            <person name="Sun E."/>
            <person name="Svirskas R."/>
            <person name="Tector C."/>
            <person name="Turner R."/>
            <person name="Venter E."/>
            <person name="Wang A.H."/>
            <person name="Wang X."/>
            <person name="Wang Z.-Y."/>
            <person name="Wassarman D.A."/>
            <person name="Weinstock G.M."/>
            <person name="Weissenbach J."/>
            <person name="Williams S.M."/>
            <person name="Woodage T."/>
            <person name="Worley K.C."/>
            <person name="Wu D."/>
            <person name="Yang S."/>
            <person name="Yao Q.A."/>
            <person name="Ye J."/>
            <person name="Yeh R.-F."/>
            <person name="Zaveri J.S."/>
            <person name="Zhan M."/>
            <person name="Zhang G."/>
            <person name="Zhao Q."/>
            <person name="Zheng L."/>
            <person name="Zheng X.H."/>
            <person name="Zhong F.N."/>
            <person name="Zhong W."/>
            <person name="Zhou X."/>
            <person name="Zhu S.C."/>
            <person name="Zhu X."/>
            <person name="Smith H.O."/>
            <person name="Gibbs R.A."/>
            <person name="Myers E.W."/>
            <person name="Rubin G.M."/>
            <person name="Venter J.C."/>
        </authorList>
    </citation>
    <scope>NUCLEOTIDE SEQUENCE [LARGE SCALE GENOMIC DNA]</scope>
    <source>
        <strain>Berkeley</strain>
    </source>
</reference>
<reference key="2">
    <citation type="journal article" date="2002" name="Genome Biol.">
        <title>Annotation of the Drosophila melanogaster euchromatic genome: a systematic review.</title>
        <authorList>
            <person name="Misra S."/>
            <person name="Crosby M.A."/>
            <person name="Mungall C.J."/>
            <person name="Matthews B.B."/>
            <person name="Campbell K.S."/>
            <person name="Hradecky P."/>
            <person name="Huang Y."/>
            <person name="Kaminker J.S."/>
            <person name="Millburn G.H."/>
            <person name="Prochnik S.E."/>
            <person name="Smith C.D."/>
            <person name="Tupy J.L."/>
            <person name="Whitfield E.J."/>
            <person name="Bayraktaroglu L."/>
            <person name="Berman B.P."/>
            <person name="Bettencourt B.R."/>
            <person name="Celniker S.E."/>
            <person name="de Grey A.D.N.J."/>
            <person name="Drysdale R.A."/>
            <person name="Harris N.L."/>
            <person name="Richter J."/>
            <person name="Russo S."/>
            <person name="Schroeder A.J."/>
            <person name="Shu S.Q."/>
            <person name="Stapleton M."/>
            <person name="Yamada C."/>
            <person name="Ashburner M."/>
            <person name="Gelbart W.M."/>
            <person name="Rubin G.M."/>
            <person name="Lewis S.E."/>
        </authorList>
    </citation>
    <scope>GENOME REANNOTATION</scope>
    <source>
        <strain>Berkeley</strain>
    </source>
</reference>
<reference key="3">
    <citation type="submission" date="2001-10" db="EMBL/GenBank/DDBJ databases">
        <authorList>
            <person name="Stapleton M."/>
            <person name="Brokstein P."/>
            <person name="Hong L."/>
            <person name="Agbayani A."/>
            <person name="Carlson J."/>
            <person name="Champe M."/>
            <person name="Chavez C."/>
            <person name="Dorsett V."/>
            <person name="Farfan D."/>
            <person name="Frise E."/>
            <person name="George R."/>
            <person name="Gonzalez M."/>
            <person name="Guarin H."/>
            <person name="Li P."/>
            <person name="Liao G."/>
            <person name="Miranda A."/>
            <person name="Mungall C.J."/>
            <person name="Nunoo J."/>
            <person name="Pacleb J."/>
            <person name="Paragas V."/>
            <person name="Park S."/>
            <person name="Phouanenavong S."/>
            <person name="Wan K."/>
            <person name="Yu C."/>
            <person name="Lewis S.E."/>
            <person name="Rubin G.M."/>
            <person name="Celniker S."/>
        </authorList>
    </citation>
    <scope>NUCLEOTIDE SEQUENCE [LARGE SCALE MRNA]</scope>
    <source>
        <strain>Berkeley</strain>
        <tissue>Embryo</tissue>
    </source>
</reference>
<reference key="4">
    <citation type="journal article" date="2000" name="Genetics">
        <title>The shut-down gene of Drosophila melanogaster encodes a novel FK506-binding protein essential for the formation of germline cysts during oogenesis.</title>
        <authorList>
            <person name="Munn K."/>
            <person name="Steward R."/>
        </authorList>
    </citation>
    <scope>FUNCTION</scope>
    <scope>SUBCELLULAR LOCATION</scope>
    <scope>TISSUE SPECIFICITY</scope>
    <scope>DISRUPTION PHENOTYPE</scope>
    <scope>MUTAGENESIS OF ALA-335</scope>
</reference>
<reference key="5">
    <citation type="journal article" date="2012" name="Mol. Cell">
        <title>The cochaperone shutdown defines a group of biogenesis factors essential for all piRNA populations in Drosophila.</title>
        <authorList>
            <person name="Olivieri D."/>
            <person name="Senti K.A."/>
            <person name="Subramanian S."/>
            <person name="Sachidanandam R."/>
            <person name="Brennecke J."/>
        </authorList>
    </citation>
    <scope>FUNCTION</scope>
    <scope>SUBCELLULAR LOCATION</scope>
    <scope>DISRUPTION PHENOTYPE</scope>
    <scope>INTERACTION WITH HSP83</scope>
</reference>
<reference key="6">
    <citation type="journal article" date="2012" name="RNA">
        <title>shutdown is a component of the Drosophila piRNA biogenesis machinery.</title>
        <authorList>
            <person name="Preall J.B."/>
            <person name="Czech B."/>
            <person name="Guzzardo P.M."/>
            <person name="Muerdter F."/>
            <person name="Hannon G.J."/>
        </authorList>
    </citation>
    <scope>FUNCTION</scope>
</reference>
<comment type="function">
    <text evidence="3 4 5">Co-chaperone required during oogenesis to repress transposable elements and prevent their mobilization, which is essential for the germline integrity. Acts via the piRNA metabolic process, which mediates the repression of transposable elements during meiosis by forming complexes composed of piRNAs and Piwi proteins and govern the methylation and subsequent repression of transposons. Acts as a co-chaperone via its interaction with Hsp83/HSP90 and is required for the biogenesis of all three piRNA major populations.</text>
</comment>
<comment type="subunit">
    <text evidence="5">Interacts with Hsp83.</text>
</comment>
<comment type="subcellular location">
    <subcellularLocation>
        <location evidence="3 5">Cytoplasm</location>
    </subcellularLocation>
    <subcellularLocation>
        <location evidence="5">Cytoplasm</location>
        <location evidence="5">Cytoplasmic ribonucleoprotein granule</location>
    </subcellularLocation>
    <text evidence="5">Localizes to the cytoplasm but is enriched in the perinuclear meiotic nuage (also known as germline granule or P granule), a germline-specific membraneless ribonucleoprotein biocondensate involved in post-transcriptional regulation of transposons and mRNAs (PubMed:22902557). Also enriched in Yb bodies (PubMed:22902557).</text>
</comment>
<comment type="tissue specificity">
    <text evidence="3">Strongly expressed in the germline stem cells and in 16-cell cysts. Present in the germ cells throughout embryogenesis. Defects are due to derepression of transposable elements and impaired piRNA biogenesis.</text>
</comment>
<comment type="disruption phenotype">
    <text evidence="3 5">Recessive female sterility with no effects on zygotic viability. Some strong alleles (WQ41 and WM40) also lead to male sterility.</text>
</comment>
<comment type="similarity">
    <text evidence="6">Belongs to the FKBP6 family.</text>
</comment>
<comment type="caution">
    <text evidence="6">Although it contains a PPIase FKBP-type domain, does not show peptidyl-prolyl cis-trans isomerase activity.</text>
</comment>
<organism evidence="8">
    <name type="scientific">Drosophila melanogaster</name>
    <name type="common">Fruit fly</name>
    <dbReference type="NCBI Taxonomy" id="7227"/>
    <lineage>
        <taxon>Eukaryota</taxon>
        <taxon>Metazoa</taxon>
        <taxon>Ecdysozoa</taxon>
        <taxon>Arthropoda</taxon>
        <taxon>Hexapoda</taxon>
        <taxon>Insecta</taxon>
        <taxon>Pterygota</taxon>
        <taxon>Neoptera</taxon>
        <taxon>Endopterygota</taxon>
        <taxon>Diptera</taxon>
        <taxon>Brachycera</taxon>
        <taxon>Muscomorpha</taxon>
        <taxon>Ephydroidea</taxon>
        <taxon>Drosophilidae</taxon>
        <taxon>Drosophila</taxon>
        <taxon>Sophophora</taxon>
    </lineage>
</organism>
<dbReference type="EMBL" id="AE013599">
    <property type="protein sequence ID" value="AAF47070.1"/>
    <property type="molecule type" value="Genomic_DNA"/>
</dbReference>
<dbReference type="EMBL" id="AY058554">
    <property type="protein sequence ID" value="AAL13783.1"/>
    <property type="molecule type" value="mRNA"/>
</dbReference>
<dbReference type="RefSeq" id="NP_611837.1">
    <property type="nucleotide sequence ID" value="NM_137993.4"/>
</dbReference>
<dbReference type="SMR" id="Q9W1I9"/>
<dbReference type="BioGRID" id="69621">
    <property type="interactions" value="10"/>
</dbReference>
<dbReference type="FunCoup" id="Q9W1I9">
    <property type="interactions" value="110"/>
</dbReference>
<dbReference type="IntAct" id="Q9W1I9">
    <property type="interactions" value="2"/>
</dbReference>
<dbReference type="STRING" id="7227.FBpp0072146"/>
<dbReference type="PaxDb" id="7227-FBpp0072146"/>
<dbReference type="DNASU" id="45360"/>
<dbReference type="EnsemblMetazoa" id="FBtr0072237">
    <property type="protein sequence ID" value="FBpp0072146"/>
    <property type="gene ID" value="FBgn0003401"/>
</dbReference>
<dbReference type="GeneID" id="45360"/>
<dbReference type="KEGG" id="dme:Dmel_CG4735"/>
<dbReference type="UCSC" id="CG4735-RA">
    <property type="organism name" value="d. melanogaster"/>
</dbReference>
<dbReference type="AGR" id="FB:FBgn0003401"/>
<dbReference type="CTD" id="45360"/>
<dbReference type="FlyBase" id="FBgn0003401">
    <property type="gene designation" value="shu"/>
</dbReference>
<dbReference type="VEuPathDB" id="VectorBase:FBgn0003401"/>
<dbReference type="eggNOG" id="KOG0543">
    <property type="taxonomic scope" value="Eukaryota"/>
</dbReference>
<dbReference type="GeneTree" id="ENSGT00940000158514"/>
<dbReference type="HOGENOM" id="CLU_013615_13_2_1"/>
<dbReference type="InParanoid" id="Q9W1I9"/>
<dbReference type="OMA" id="RGTKFEF"/>
<dbReference type="OrthoDB" id="8116123at2759"/>
<dbReference type="PhylomeDB" id="Q9W1I9"/>
<dbReference type="BioGRID-ORCS" id="45360">
    <property type="hits" value="0 hits in 1 CRISPR screen"/>
</dbReference>
<dbReference type="ChiTaRS" id="para">
    <property type="organism name" value="fly"/>
</dbReference>
<dbReference type="GenomeRNAi" id="45360"/>
<dbReference type="PRO" id="PR:Q9W1I9"/>
<dbReference type="Proteomes" id="UP000000803">
    <property type="component" value="Chromosome 2R"/>
</dbReference>
<dbReference type="Bgee" id="FBgn0003401">
    <property type="expression patterns" value="Expressed in spermatogonium in testis and 33 other cell types or tissues"/>
</dbReference>
<dbReference type="GO" id="GO:0005737">
    <property type="term" value="C:cytoplasm"/>
    <property type="evidence" value="ECO:0000314"/>
    <property type="project" value="FlyBase"/>
</dbReference>
<dbReference type="GO" id="GO:0043186">
    <property type="term" value="C:P granule"/>
    <property type="evidence" value="ECO:0000314"/>
    <property type="project" value="FlyBase"/>
</dbReference>
<dbReference type="GO" id="GO:0070725">
    <property type="term" value="C:Yb body"/>
    <property type="evidence" value="ECO:0000314"/>
    <property type="project" value="FlyBase"/>
</dbReference>
<dbReference type="GO" id="GO:0051879">
    <property type="term" value="F:Hsp90 protein binding"/>
    <property type="evidence" value="ECO:0000318"/>
    <property type="project" value="GO_Central"/>
</dbReference>
<dbReference type="GO" id="GO:0003755">
    <property type="term" value="F:peptidyl-prolyl cis-trans isomerase activity"/>
    <property type="evidence" value="ECO:0007669"/>
    <property type="project" value="InterPro"/>
</dbReference>
<dbReference type="GO" id="GO:0051321">
    <property type="term" value="P:meiotic cell cycle"/>
    <property type="evidence" value="ECO:0007669"/>
    <property type="project" value="UniProtKB-KW"/>
</dbReference>
<dbReference type="GO" id="GO:0048477">
    <property type="term" value="P:oogenesis"/>
    <property type="evidence" value="ECO:0000315"/>
    <property type="project" value="FlyBase"/>
</dbReference>
<dbReference type="GO" id="GO:0034587">
    <property type="term" value="P:piRNA processing"/>
    <property type="evidence" value="ECO:0000318"/>
    <property type="project" value="GO_Central"/>
</dbReference>
<dbReference type="GO" id="GO:0140990">
    <property type="term" value="P:primary piRNA processing"/>
    <property type="evidence" value="ECO:0000315"/>
    <property type="project" value="FlyBase"/>
</dbReference>
<dbReference type="GO" id="GO:0140965">
    <property type="term" value="P:secondary piRNA processing"/>
    <property type="evidence" value="ECO:0000315"/>
    <property type="project" value="FlyBase"/>
</dbReference>
<dbReference type="GO" id="GO:0007283">
    <property type="term" value="P:spermatogenesis"/>
    <property type="evidence" value="ECO:0000318"/>
    <property type="project" value="GO_Central"/>
</dbReference>
<dbReference type="GO" id="GO:0010526">
    <property type="term" value="P:transposable element silencing"/>
    <property type="evidence" value="ECO:0000315"/>
    <property type="project" value="FlyBase"/>
</dbReference>
<dbReference type="FunFam" id="1.25.40.10:FF:001397">
    <property type="entry name" value="Peptidylprolyl isomerase"/>
    <property type="match status" value="1"/>
</dbReference>
<dbReference type="Gene3D" id="3.10.50.40">
    <property type="match status" value="1"/>
</dbReference>
<dbReference type="Gene3D" id="1.25.40.10">
    <property type="entry name" value="Tetratricopeptide repeat domain"/>
    <property type="match status" value="1"/>
</dbReference>
<dbReference type="InterPro" id="IPR042282">
    <property type="entry name" value="FKBP6/shu"/>
</dbReference>
<dbReference type="InterPro" id="IPR046357">
    <property type="entry name" value="PPIase_dom_sf"/>
</dbReference>
<dbReference type="InterPro" id="IPR001179">
    <property type="entry name" value="PPIase_FKBP_dom"/>
</dbReference>
<dbReference type="InterPro" id="IPR011990">
    <property type="entry name" value="TPR-like_helical_dom_sf"/>
</dbReference>
<dbReference type="PANTHER" id="PTHR46674">
    <property type="entry name" value="INACTIVE PEPTIDYL-PROLYL CIS-TRANS ISOMERASE FKBP6"/>
    <property type="match status" value="1"/>
</dbReference>
<dbReference type="PANTHER" id="PTHR46674:SF1">
    <property type="entry name" value="INACTIVE PEPTIDYL-PROLYL CIS-TRANS ISOMERASE FKBP6"/>
    <property type="match status" value="1"/>
</dbReference>
<dbReference type="Pfam" id="PF00254">
    <property type="entry name" value="FKBP_C"/>
    <property type="match status" value="1"/>
</dbReference>
<dbReference type="SUPFAM" id="SSF54534">
    <property type="entry name" value="FKBP-like"/>
    <property type="match status" value="1"/>
</dbReference>
<dbReference type="SUPFAM" id="SSF48452">
    <property type="entry name" value="TPR-like"/>
    <property type="match status" value="1"/>
</dbReference>
<dbReference type="PROSITE" id="PS50059">
    <property type="entry name" value="FKBP_PPIASE"/>
    <property type="match status" value="1"/>
</dbReference>
<accession>Q9W1I9</accession>
<feature type="chain" id="PRO_0000428729" description="Inactive peptidyl-prolyl cis-trans isomerase shutdown">
    <location>
        <begin position="1"/>
        <end position="455"/>
    </location>
</feature>
<feature type="domain" description="PPIase FKBP-type" evidence="1">
    <location>
        <begin position="103"/>
        <end position="192"/>
    </location>
</feature>
<feature type="repeat" description="TPR 1">
    <location>
        <begin position="218"/>
        <end position="251"/>
    </location>
</feature>
<feature type="repeat" description="TPR 2">
    <location>
        <begin position="303"/>
        <end position="336"/>
    </location>
</feature>
<feature type="region of interest" description="Disordered" evidence="2">
    <location>
        <begin position="34"/>
        <end position="54"/>
    </location>
</feature>
<feature type="compositionally biased region" description="Acidic residues" evidence="2">
    <location>
        <begin position="44"/>
        <end position="54"/>
    </location>
</feature>
<feature type="mutagenesis site" description="In PB70; weak allele that only affects female fertility without affecting male fertility." evidence="3">
    <original>A</original>
    <variation>T</variation>
    <location>
        <position position="335"/>
    </location>
</feature>
<keyword id="KW-0963">Cytoplasm</keyword>
<keyword id="KW-0221">Differentiation</keyword>
<keyword id="KW-0469">Meiosis</keyword>
<keyword id="KW-0896">Oogenesis</keyword>
<keyword id="KW-1185">Reference proteome</keyword>
<keyword id="KW-0677">Repeat</keyword>
<keyword id="KW-0943">RNA-mediated gene silencing</keyword>
<keyword id="KW-0802">TPR repeat</keyword>